<proteinExistence type="evidence at protein level"/>
<sequence>MADSSGQQGKGRRVQPQWSPPAGTQPCRLHLYNSLTRNKEVFIPQDGKKVTWYCCGPTVYDASHMGHARSYISFDILRRVLKDYFKFDVFYCMNITDIDDKIIKRARQNHLFEQYREKRPEAAQLLEDVQAALKPFSVKLNETTDPDKKQMLERIQHAVQLATEPLEKAVQSRLTGEEVNSCVEVLLEEAKDLLSDWLDSTLGCDVTDNSIFSKLPKFWEGDFHRDMEALNVLPPDVLTRVSEYVPEIVNFVQKIVDNGYGYVSNGSVYFDTAKFASSEKHSYGKLVPEAVGDQKALQEGEGDLSISADRLSEKRSPNDFALWKASKPGEPSWPCPWGKGRPGWHIECSAMAGTLLGASMDIHGGGFDLRFPHHDNELAQSEAYFENDCWVRYFLHTGHLTIAGCKMSKSLKNFITIKDALKKHSARQLRLAFLMHSWKDTLDYSSNTMESALQYEKFLNEFFLNVKDILRAPVDITGQFEKWGEEEAELNKNFYDKKTAIHKALCDNVDTRTVMEEMRALVSQCNLYMAARKAVRKRPNQALLENIALYLTHMLKIFGAVEEDSSLGFPVGGPGTSLSLEATVMPYLQVLSEFREGVRKIAREQKVPEILQLSDALRDNILPELGVRFEDHEGLPTVVKLVDRNTLLKEREEKRRVEEEKRKKKEEAARRKQEQEAAKLAKMKIPPSEMFLSETDKYSKFDENGLPTHDMEGKELSKGQAKKLKKLFEAQEKLYKEYLQMAQNGSFQ</sequence>
<comment type="function">
    <text evidence="4 5">Catalyzes the ATP-dependent ligation of cysteine to tRNA(Cys).</text>
</comment>
<comment type="catalytic activity">
    <reaction evidence="4 5">
        <text>tRNA(Cys) + L-cysteine + ATP = L-cysteinyl-tRNA(Cys) + AMP + diphosphate</text>
        <dbReference type="Rhea" id="RHEA:17773"/>
        <dbReference type="Rhea" id="RHEA-COMP:9661"/>
        <dbReference type="Rhea" id="RHEA-COMP:9679"/>
        <dbReference type="ChEBI" id="CHEBI:30616"/>
        <dbReference type="ChEBI" id="CHEBI:33019"/>
        <dbReference type="ChEBI" id="CHEBI:35235"/>
        <dbReference type="ChEBI" id="CHEBI:78442"/>
        <dbReference type="ChEBI" id="CHEBI:78517"/>
        <dbReference type="ChEBI" id="CHEBI:456215"/>
        <dbReference type="EC" id="6.1.1.16"/>
    </reaction>
    <physiologicalReaction direction="left-to-right" evidence="11">
        <dbReference type="Rhea" id="RHEA:17774"/>
    </physiologicalReaction>
</comment>
<comment type="cofactor">
    <cofactor evidence="2">
        <name>Zn(2+)</name>
        <dbReference type="ChEBI" id="CHEBI:29105"/>
    </cofactor>
    <text evidence="2">Binds 1 zinc ion per subunit.</text>
</comment>
<comment type="biophysicochemical properties">
    <molecule>Isoform 1</molecule>
    <kinetics>
        <KM evidence="4">1.4 uM for tRNA(Cys)</KM>
        <Vmax evidence="4">18000.0 pmol/sec/mg enzyme for tRNA(Cys)</Vmax>
    </kinetics>
</comment>
<comment type="biophysicochemical properties">
    <molecule>Isoform 2</molecule>
    <kinetics>
        <KM evidence="4">1.4 uM for tRNA(Cys)</KM>
        <Vmax evidence="4">4000.0 pmol/sec/mg enzyme for tRNA(Cys)</Vmax>
    </kinetics>
</comment>
<comment type="subunit">
    <text evidence="4">Homodimer.</text>
</comment>
<comment type="subcellular location">
    <subcellularLocation>
        <location evidence="5">Cytoplasm</location>
    </subcellularLocation>
</comment>
<comment type="alternative products">
    <event type="alternative splicing"/>
    <isoform>
        <id>P49589-1</id>
        <name>1</name>
        <sequence type="displayed"/>
    </isoform>
    <isoform>
        <id>P49589-2</id>
        <name>2</name>
        <sequence type="described" ref="VSP_006312"/>
    </isoform>
    <isoform>
        <id>P49589-3</id>
        <name>3</name>
        <sequence type="described" ref="VSP_043571"/>
    </isoform>
</comment>
<comment type="disease" evidence="5">
    <disease id="DI-05847">
        <name>Microcephaly, developmental delay, and brittle hair syndrome</name>
        <acronym>MDBH</acronym>
        <description>An autosomal recessive disorder characterized by developmental delay, motor and cognitive disabilities, brittle hair and nails, failure to thrive, and short stature.</description>
        <dbReference type="MIM" id="618891"/>
    </disease>
    <text>The disease is caused by variants affecting the gene represented in this entry.</text>
</comment>
<comment type="disease">
    <text>A chromosomal aberration involving CARS is associated with inflammatory myofibroblastic tumors (IMTs). Translocation t(2;11)(p23;p15) with ALK.</text>
</comment>
<comment type="miscellaneous">
    <molecule>Isoform 2</molecule>
    <text evidence="10">Found in 20% of the mRNAs.</text>
</comment>
<comment type="similarity">
    <text evidence="10">Belongs to the class-I aminoacyl-tRNA synthetase family.</text>
</comment>
<comment type="sequence caution" evidence="10">
    <conflict type="frameshift">
        <sequence resource="EMBL-CDS" id="AAA73901"/>
    </conflict>
</comment>
<comment type="online information" name="Atlas of Genetics and Cytogenetics in Oncology and Haematology">
    <link uri="https://atlasgeneticsoncology.org/gene/484/CARS"/>
</comment>
<reference key="1">
    <citation type="journal article" date="1994" name="DNA Seq.">
        <title>Nucleotide and deduced amino acid sequence of human cysteinyl-tRNA synthetase.</title>
        <authorList>
            <person name="Cruzen M.E."/>
            <person name="Arfin S.M."/>
        </authorList>
    </citation>
    <scope>NUCLEOTIDE SEQUENCE [MRNA] (ISOFORM 2)</scope>
    <source>
        <tissue>Brain</tissue>
    </source>
</reference>
<reference key="2">
    <citation type="journal article" date="2001" name="Biol. Chem.">
        <title>Isolation of two cDNAs encoding functional human cytoplasmic cysteinyl-tRNA synthetase.</title>
        <authorList>
            <person name="Davidson E."/>
            <person name="Caffarella J."/>
            <person name="Vitseva O."/>
            <person name="Hou Y.M."/>
            <person name="King M.P."/>
        </authorList>
    </citation>
    <scope>NUCLEOTIDE SEQUENCE [MRNA] (ISOFORMS 1 AND 2)</scope>
    <scope>FUNCTION</scope>
    <scope>CATALYTIC ACTIVITY</scope>
    <scope>BIOPHYSICOCHEMICAL PROPERTIES</scope>
    <scope>SUBUNIT</scope>
</reference>
<reference key="3">
    <citation type="submission" date="2003-08" db="EMBL/GenBank/DDBJ databases">
        <title>Cloning of human full-length CDSs in BD Creator(TM) system donor vector.</title>
        <authorList>
            <person name="Kalnine N."/>
            <person name="Chen X."/>
            <person name="Rolfs A."/>
            <person name="Halleck A."/>
            <person name="Hines L."/>
            <person name="Eisenstein S."/>
            <person name="Koundinya M."/>
            <person name="Raphael J."/>
            <person name="Moreira D."/>
            <person name="Kelley T."/>
            <person name="LaBaer J."/>
            <person name="Lin Y."/>
            <person name="Phelan M."/>
            <person name="Farmer A."/>
        </authorList>
    </citation>
    <scope>NUCLEOTIDE SEQUENCE [LARGE SCALE MRNA] (ISOFORM 1)</scope>
</reference>
<reference key="4">
    <citation type="journal article" date="2004" name="Nat. Genet.">
        <title>Complete sequencing and characterization of 21,243 full-length human cDNAs.</title>
        <authorList>
            <person name="Ota T."/>
            <person name="Suzuki Y."/>
            <person name="Nishikawa T."/>
            <person name="Otsuki T."/>
            <person name="Sugiyama T."/>
            <person name="Irie R."/>
            <person name="Wakamatsu A."/>
            <person name="Hayashi K."/>
            <person name="Sato H."/>
            <person name="Nagai K."/>
            <person name="Kimura K."/>
            <person name="Makita H."/>
            <person name="Sekine M."/>
            <person name="Obayashi M."/>
            <person name="Nishi T."/>
            <person name="Shibahara T."/>
            <person name="Tanaka T."/>
            <person name="Ishii S."/>
            <person name="Yamamoto J."/>
            <person name="Saito K."/>
            <person name="Kawai Y."/>
            <person name="Isono Y."/>
            <person name="Nakamura Y."/>
            <person name="Nagahari K."/>
            <person name="Murakami K."/>
            <person name="Yasuda T."/>
            <person name="Iwayanagi T."/>
            <person name="Wagatsuma M."/>
            <person name="Shiratori A."/>
            <person name="Sudo H."/>
            <person name="Hosoiri T."/>
            <person name="Kaku Y."/>
            <person name="Kodaira H."/>
            <person name="Kondo H."/>
            <person name="Sugawara M."/>
            <person name="Takahashi M."/>
            <person name="Kanda K."/>
            <person name="Yokoi T."/>
            <person name="Furuya T."/>
            <person name="Kikkawa E."/>
            <person name="Omura Y."/>
            <person name="Abe K."/>
            <person name="Kamihara K."/>
            <person name="Katsuta N."/>
            <person name="Sato K."/>
            <person name="Tanikawa M."/>
            <person name="Yamazaki M."/>
            <person name="Ninomiya K."/>
            <person name="Ishibashi T."/>
            <person name="Yamashita H."/>
            <person name="Murakawa K."/>
            <person name="Fujimori K."/>
            <person name="Tanai H."/>
            <person name="Kimata M."/>
            <person name="Watanabe M."/>
            <person name="Hiraoka S."/>
            <person name="Chiba Y."/>
            <person name="Ishida S."/>
            <person name="Ono Y."/>
            <person name="Takiguchi S."/>
            <person name="Watanabe S."/>
            <person name="Yosida M."/>
            <person name="Hotuta T."/>
            <person name="Kusano J."/>
            <person name="Kanehori K."/>
            <person name="Takahashi-Fujii A."/>
            <person name="Hara H."/>
            <person name="Tanase T.-O."/>
            <person name="Nomura Y."/>
            <person name="Togiya S."/>
            <person name="Komai F."/>
            <person name="Hara R."/>
            <person name="Takeuchi K."/>
            <person name="Arita M."/>
            <person name="Imose N."/>
            <person name="Musashino K."/>
            <person name="Yuuki H."/>
            <person name="Oshima A."/>
            <person name="Sasaki N."/>
            <person name="Aotsuka S."/>
            <person name="Yoshikawa Y."/>
            <person name="Matsunawa H."/>
            <person name="Ichihara T."/>
            <person name="Shiohata N."/>
            <person name="Sano S."/>
            <person name="Moriya S."/>
            <person name="Momiyama H."/>
            <person name="Satoh N."/>
            <person name="Takami S."/>
            <person name="Terashima Y."/>
            <person name="Suzuki O."/>
            <person name="Nakagawa S."/>
            <person name="Senoh A."/>
            <person name="Mizoguchi H."/>
            <person name="Goto Y."/>
            <person name="Shimizu F."/>
            <person name="Wakebe H."/>
            <person name="Hishigaki H."/>
            <person name="Watanabe T."/>
            <person name="Sugiyama A."/>
            <person name="Takemoto M."/>
            <person name="Kawakami B."/>
            <person name="Yamazaki M."/>
            <person name="Watanabe K."/>
            <person name="Kumagai A."/>
            <person name="Itakura S."/>
            <person name="Fukuzumi Y."/>
            <person name="Fujimori Y."/>
            <person name="Komiyama M."/>
            <person name="Tashiro H."/>
            <person name="Tanigami A."/>
            <person name="Fujiwara T."/>
            <person name="Ono T."/>
            <person name="Yamada K."/>
            <person name="Fujii Y."/>
            <person name="Ozaki K."/>
            <person name="Hirao M."/>
            <person name="Ohmori Y."/>
            <person name="Kawabata A."/>
            <person name="Hikiji T."/>
            <person name="Kobatake N."/>
            <person name="Inagaki H."/>
            <person name="Ikema Y."/>
            <person name="Okamoto S."/>
            <person name="Okitani R."/>
            <person name="Kawakami T."/>
            <person name="Noguchi S."/>
            <person name="Itoh T."/>
            <person name="Shigeta K."/>
            <person name="Senba T."/>
            <person name="Matsumura K."/>
            <person name="Nakajima Y."/>
            <person name="Mizuno T."/>
            <person name="Morinaga M."/>
            <person name="Sasaki M."/>
            <person name="Togashi T."/>
            <person name="Oyama M."/>
            <person name="Hata H."/>
            <person name="Watanabe M."/>
            <person name="Komatsu T."/>
            <person name="Mizushima-Sugano J."/>
            <person name="Satoh T."/>
            <person name="Shirai Y."/>
            <person name="Takahashi Y."/>
            <person name="Nakagawa K."/>
            <person name="Okumura K."/>
            <person name="Nagase T."/>
            <person name="Nomura N."/>
            <person name="Kikuchi H."/>
            <person name="Masuho Y."/>
            <person name="Yamashita R."/>
            <person name="Nakai K."/>
            <person name="Yada T."/>
            <person name="Nakamura Y."/>
            <person name="Ohara O."/>
            <person name="Isogai T."/>
            <person name="Sugano S."/>
        </authorList>
    </citation>
    <scope>NUCLEOTIDE SEQUENCE [LARGE SCALE MRNA] (ISOFORM 3)</scope>
    <source>
        <tissue>Testis</tissue>
    </source>
</reference>
<reference key="5">
    <citation type="journal article" date="2007" name="BMC Genomics">
        <title>The full-ORF clone resource of the German cDNA consortium.</title>
        <authorList>
            <person name="Bechtel S."/>
            <person name="Rosenfelder H."/>
            <person name="Duda A."/>
            <person name="Schmidt C.P."/>
            <person name="Ernst U."/>
            <person name="Wellenreuther R."/>
            <person name="Mehrle A."/>
            <person name="Schuster C."/>
            <person name="Bahr A."/>
            <person name="Bloecker H."/>
            <person name="Heubner D."/>
            <person name="Hoerlein A."/>
            <person name="Michel G."/>
            <person name="Wedler H."/>
            <person name="Koehrer K."/>
            <person name="Ottenwaelder B."/>
            <person name="Poustka A."/>
            <person name="Wiemann S."/>
            <person name="Schupp I."/>
        </authorList>
    </citation>
    <scope>NUCLEOTIDE SEQUENCE [LARGE SCALE MRNA] (ISOFORM 3)</scope>
    <source>
        <tissue>Cervix</tissue>
    </source>
</reference>
<reference key="6">
    <citation type="journal article" date="2006" name="Nature">
        <title>Human chromosome 11 DNA sequence and analysis including novel gene identification.</title>
        <authorList>
            <person name="Taylor T.D."/>
            <person name="Noguchi H."/>
            <person name="Totoki Y."/>
            <person name="Toyoda A."/>
            <person name="Kuroki Y."/>
            <person name="Dewar K."/>
            <person name="Lloyd C."/>
            <person name="Itoh T."/>
            <person name="Takeda T."/>
            <person name="Kim D.-W."/>
            <person name="She X."/>
            <person name="Barlow K.F."/>
            <person name="Bloom T."/>
            <person name="Bruford E."/>
            <person name="Chang J.L."/>
            <person name="Cuomo C.A."/>
            <person name="Eichler E."/>
            <person name="FitzGerald M.G."/>
            <person name="Jaffe D.B."/>
            <person name="LaButti K."/>
            <person name="Nicol R."/>
            <person name="Park H.-S."/>
            <person name="Seaman C."/>
            <person name="Sougnez C."/>
            <person name="Yang X."/>
            <person name="Zimmer A.R."/>
            <person name="Zody M.C."/>
            <person name="Birren B.W."/>
            <person name="Nusbaum C."/>
            <person name="Fujiyama A."/>
            <person name="Hattori M."/>
            <person name="Rogers J."/>
            <person name="Lander E.S."/>
            <person name="Sakaki Y."/>
        </authorList>
    </citation>
    <scope>NUCLEOTIDE SEQUENCE [LARGE SCALE GENOMIC DNA]</scope>
</reference>
<reference key="7">
    <citation type="submission" date="2005-07" db="EMBL/GenBank/DDBJ databases">
        <authorList>
            <person name="Mural R.J."/>
            <person name="Istrail S."/>
            <person name="Sutton G."/>
            <person name="Florea L."/>
            <person name="Halpern A.L."/>
            <person name="Mobarry C.M."/>
            <person name="Lippert R."/>
            <person name="Walenz B."/>
            <person name="Shatkay H."/>
            <person name="Dew I."/>
            <person name="Miller J.R."/>
            <person name="Flanigan M.J."/>
            <person name="Edwards N.J."/>
            <person name="Bolanos R."/>
            <person name="Fasulo D."/>
            <person name="Halldorsson B.V."/>
            <person name="Hannenhalli S."/>
            <person name="Turner R."/>
            <person name="Yooseph S."/>
            <person name="Lu F."/>
            <person name="Nusskern D.R."/>
            <person name="Shue B.C."/>
            <person name="Zheng X.H."/>
            <person name="Zhong F."/>
            <person name="Delcher A.L."/>
            <person name="Huson D.H."/>
            <person name="Kravitz S.A."/>
            <person name="Mouchard L."/>
            <person name="Reinert K."/>
            <person name="Remington K.A."/>
            <person name="Clark A.G."/>
            <person name="Waterman M.S."/>
            <person name="Eichler E.E."/>
            <person name="Adams M.D."/>
            <person name="Hunkapiller M.W."/>
            <person name="Myers E.W."/>
            <person name="Venter J.C."/>
        </authorList>
    </citation>
    <scope>NUCLEOTIDE SEQUENCE [LARGE SCALE GENOMIC DNA]</scope>
</reference>
<reference key="8">
    <citation type="journal article" date="2004" name="Genome Res.">
        <title>The status, quality, and expansion of the NIH full-length cDNA project: the Mammalian Gene Collection (MGC).</title>
        <authorList>
            <consortium name="The MGC Project Team"/>
        </authorList>
    </citation>
    <scope>NUCLEOTIDE SEQUENCE [LARGE SCALE MRNA] (ISOFORM 1)</scope>
    <source>
        <tissue>Lung</tissue>
    </source>
</reference>
<reference key="9">
    <citation type="journal article" date="2002" name="Genes Chromosomes Cancer">
        <title>Identification of novel fusion partners of ALK, the anaplastic lymphoma kinase, in anaplastic large-cell lymphoma and inflammatory myofibroblastic tumor.</title>
        <authorList>
            <person name="Cools J."/>
            <person name="Wlodarska I."/>
            <person name="Somers R."/>
            <person name="Mentens N."/>
            <person name="Pedeutour F."/>
            <person name="Maes B."/>
            <person name="De Wolf-Peeters C."/>
            <person name="Pauwels P."/>
            <person name="Hagemeijer A."/>
            <person name="Marynen P."/>
        </authorList>
    </citation>
    <scope>CHROMOSOMAL TRANSLOCATION WITH ALK</scope>
</reference>
<reference key="10">
    <citation type="journal article" date="2005" name="Nat. Biotechnol.">
        <title>Immunoaffinity profiling of tyrosine phosphorylation in cancer cells.</title>
        <authorList>
            <person name="Rush J."/>
            <person name="Moritz A."/>
            <person name="Lee K.A."/>
            <person name="Guo A."/>
            <person name="Goss V.L."/>
            <person name="Spek E.J."/>
            <person name="Zhang H."/>
            <person name="Zha X.-M."/>
            <person name="Polakiewicz R.D."/>
            <person name="Comb M.J."/>
        </authorList>
    </citation>
    <scope>IDENTIFICATION BY MASS SPECTROMETRY [LARGE SCALE ANALYSIS]</scope>
</reference>
<reference key="11">
    <citation type="journal article" date="2008" name="Proc. Natl. Acad. Sci. U.S.A.">
        <title>A quantitative atlas of mitotic phosphorylation.</title>
        <authorList>
            <person name="Dephoure N."/>
            <person name="Zhou C."/>
            <person name="Villen J."/>
            <person name="Beausoleil S.A."/>
            <person name="Bakalarski C.E."/>
            <person name="Elledge S.J."/>
            <person name="Gygi S.P."/>
        </authorList>
    </citation>
    <scope>PHOSPHORYLATION [LARGE SCALE ANALYSIS] AT SER-746</scope>
    <scope>IDENTIFICATION BY MASS SPECTROMETRY [LARGE SCALE ANALYSIS]</scope>
    <source>
        <tissue>Cervix carcinoma</tissue>
    </source>
</reference>
<reference key="12">
    <citation type="journal article" date="2009" name="Science">
        <title>Lysine acetylation targets protein complexes and co-regulates major cellular functions.</title>
        <authorList>
            <person name="Choudhary C."/>
            <person name="Kumar C."/>
            <person name="Gnad F."/>
            <person name="Nielsen M.L."/>
            <person name="Rehman M."/>
            <person name="Walther T.C."/>
            <person name="Olsen J.V."/>
            <person name="Mann M."/>
        </authorList>
    </citation>
    <scope>ACETYLATION [LARGE SCALE ANALYSIS] AT LYS-503</scope>
    <scope>IDENTIFICATION BY MASS SPECTROMETRY [LARGE SCALE ANALYSIS]</scope>
</reference>
<reference key="13">
    <citation type="journal article" date="2010" name="Sci. Signal.">
        <title>Quantitative phosphoproteomics reveals widespread full phosphorylation site occupancy during mitosis.</title>
        <authorList>
            <person name="Olsen J.V."/>
            <person name="Vermeulen M."/>
            <person name="Santamaria A."/>
            <person name="Kumar C."/>
            <person name="Miller M.L."/>
            <person name="Jensen L.J."/>
            <person name="Gnad F."/>
            <person name="Cox J."/>
            <person name="Jensen T.S."/>
            <person name="Nigg E.A."/>
            <person name="Brunak S."/>
            <person name="Mann M."/>
        </authorList>
    </citation>
    <scope>PHOSPHORYLATION [LARGE SCALE ANALYSIS] AT SER-746</scope>
    <scope>PHOSPHORYLATION [LARGE SCALE ANALYSIS] AT SER-79 (ISOFORM 3)</scope>
    <scope>IDENTIFICATION BY MASS SPECTROMETRY [LARGE SCALE ANALYSIS]</scope>
    <source>
        <tissue>Cervix carcinoma</tissue>
    </source>
</reference>
<reference key="14">
    <citation type="journal article" date="2011" name="BMC Syst. Biol.">
        <title>Initial characterization of the human central proteome.</title>
        <authorList>
            <person name="Burkard T.R."/>
            <person name="Planyavsky M."/>
            <person name="Kaupe I."/>
            <person name="Breitwieser F.P."/>
            <person name="Buerckstuemmer T."/>
            <person name="Bennett K.L."/>
            <person name="Superti-Furga G."/>
            <person name="Colinge J."/>
        </authorList>
    </citation>
    <scope>IDENTIFICATION BY MASS SPECTROMETRY [LARGE SCALE ANALYSIS]</scope>
</reference>
<reference key="15">
    <citation type="journal article" date="2012" name="Proc. Natl. Acad. Sci. U.S.A.">
        <title>N-terminal acetylome analyses and functional insights of the N-terminal acetyltransferase NatB.</title>
        <authorList>
            <person name="Van Damme P."/>
            <person name="Lasa M."/>
            <person name="Polevoda B."/>
            <person name="Gazquez C."/>
            <person name="Elosegui-Artola A."/>
            <person name="Kim D.S."/>
            <person name="De Juan-Pardo E."/>
            <person name="Demeyer K."/>
            <person name="Hole K."/>
            <person name="Larrea E."/>
            <person name="Timmerman E."/>
            <person name="Prieto J."/>
            <person name="Arnesen T."/>
            <person name="Sherman F."/>
            <person name="Gevaert K."/>
            <person name="Aldabe R."/>
        </authorList>
    </citation>
    <scope>ACETYLATION [LARGE SCALE ANALYSIS] AT ALA-2</scope>
    <scope>CLEAVAGE OF INITIATOR METHIONINE [LARGE SCALE ANALYSIS]</scope>
    <scope>IDENTIFICATION BY MASS SPECTROMETRY [LARGE SCALE ANALYSIS]</scope>
</reference>
<reference key="16">
    <citation type="journal article" date="2013" name="J. Proteome Res.">
        <title>Toward a comprehensive characterization of a human cancer cell phosphoproteome.</title>
        <authorList>
            <person name="Zhou H."/>
            <person name="Di Palma S."/>
            <person name="Preisinger C."/>
            <person name="Peng M."/>
            <person name="Polat A.N."/>
            <person name="Heck A.J."/>
            <person name="Mohammed S."/>
        </authorList>
    </citation>
    <scope>PHOSPHORYLATION [LARGE SCALE ANALYSIS] AT SER-19 AND SER-307</scope>
    <scope>IDENTIFICATION BY MASS SPECTROMETRY [LARGE SCALE ANALYSIS]</scope>
    <source>
        <tissue>Cervix carcinoma</tissue>
        <tissue>Erythroleukemia</tissue>
    </source>
</reference>
<reference key="17">
    <citation type="journal article" date="2014" name="J. Proteomics">
        <title>An enzyme assisted RP-RPLC approach for in-depth analysis of human liver phosphoproteome.</title>
        <authorList>
            <person name="Bian Y."/>
            <person name="Song C."/>
            <person name="Cheng K."/>
            <person name="Dong M."/>
            <person name="Wang F."/>
            <person name="Huang J."/>
            <person name="Sun D."/>
            <person name="Wang L."/>
            <person name="Ye M."/>
            <person name="Zou H."/>
        </authorList>
    </citation>
    <scope>PHOSPHORYLATION [LARGE SCALE ANALYSIS] AT SER-19; SER-305 AND SER-307</scope>
    <scope>IDENTIFICATION BY MASS SPECTROMETRY [LARGE SCALE ANALYSIS]</scope>
    <source>
        <tissue>Liver</tissue>
    </source>
</reference>
<reference key="18">
    <citation type="journal article" date="2019" name="Am. J. Hum. Genet.">
        <title>Cysteinyl-tRNA synthetase mutations cause a multi-system, recessive disease that includes microcephaly, developmental delay, and brittle hair and nails.</title>
        <authorList>
            <person name="Kuo M.E."/>
            <person name="Theil A.F."/>
            <person name="Kievit A."/>
            <person name="Malicdan M.C."/>
            <person name="Introne W.J."/>
            <person name="Christian T."/>
            <person name="Verheijen F.W."/>
            <person name="Smith D.E.C."/>
            <person name="Mendes M.I."/>
            <person name="Hussaarts-Odijk L."/>
            <person name="van der Meijden E."/>
            <person name="van Slegtenhorst M."/>
            <person name="Wilke M."/>
            <person name="Vermeulen W."/>
            <person name="Raams A."/>
            <person name="Groden C."/>
            <person name="Shimada S."/>
            <person name="Meyer-Schuman R."/>
            <person name="Hou Y.M."/>
            <person name="Gahl W.A."/>
            <person name="Antonellis A."/>
            <person name="Salomons G.S."/>
            <person name="Mancini G.M.S."/>
        </authorList>
    </citation>
    <scope>VARIANTS MDBH HIS-341; LEU-359; 380-GLN--GLN-748 DEL AND GLN-400</scope>
    <scope>CHARACTERIZATION OF VARIANTS MDBH HIS-341; LEU-359; 380-GLN--GLN-748 DEL AND GLN-400</scope>
    <scope>FUNCTION</scope>
    <scope>CATALYTIC ACTIVITY</scope>
    <scope>INVOLVEMENT IN MDBH</scope>
    <scope>SUBCELLULAR LOCATION</scope>
</reference>
<organism>
    <name type="scientific">Homo sapiens</name>
    <name type="common">Human</name>
    <dbReference type="NCBI Taxonomy" id="9606"/>
    <lineage>
        <taxon>Eukaryota</taxon>
        <taxon>Metazoa</taxon>
        <taxon>Chordata</taxon>
        <taxon>Craniata</taxon>
        <taxon>Vertebrata</taxon>
        <taxon>Euteleostomi</taxon>
        <taxon>Mammalia</taxon>
        <taxon>Eutheria</taxon>
        <taxon>Euarchontoglires</taxon>
        <taxon>Primates</taxon>
        <taxon>Haplorrhini</taxon>
        <taxon>Catarrhini</taxon>
        <taxon>Hominidae</taxon>
        <taxon>Homo</taxon>
    </lineage>
</organism>
<keyword id="KW-0007">Acetylation</keyword>
<keyword id="KW-0025">Alternative splicing</keyword>
<keyword id="KW-0030">Aminoacyl-tRNA synthetase</keyword>
<keyword id="KW-0067">ATP-binding</keyword>
<keyword id="KW-0160">Chromosomal rearrangement</keyword>
<keyword id="KW-0963">Cytoplasm</keyword>
<keyword id="KW-0225">Disease variant</keyword>
<keyword id="KW-0242">Dwarfism</keyword>
<keyword id="KW-0436">Ligase</keyword>
<keyword id="KW-0479">Metal-binding</keyword>
<keyword id="KW-0547">Nucleotide-binding</keyword>
<keyword id="KW-0597">Phosphoprotein</keyword>
<keyword id="KW-0648">Protein biosynthesis</keyword>
<keyword id="KW-1267">Proteomics identification</keyword>
<keyword id="KW-0656">Proto-oncogene</keyword>
<keyword id="KW-1185">Reference proteome</keyword>
<keyword id="KW-0862">Zinc</keyword>
<protein>
    <recommendedName>
        <fullName>Cysteine--tRNA ligase, cytoplasmic</fullName>
        <ecNumber evidence="4 5">6.1.1.16</ecNumber>
    </recommendedName>
    <alternativeName>
        <fullName>Cysteinyl-tRNA synthetase</fullName>
        <shortName>CysRS</shortName>
    </alternativeName>
</protein>
<name>SYCC_HUMAN</name>
<feature type="initiator methionine" description="Removed" evidence="16">
    <location>
        <position position="1"/>
    </location>
</feature>
<feature type="chain" id="PRO_0000159550" description="Cysteine--tRNA ligase, cytoplasmic">
    <location>
        <begin position="2"/>
        <end position="748"/>
    </location>
</feature>
<feature type="region of interest" description="Disordered" evidence="3">
    <location>
        <begin position="1"/>
        <end position="25"/>
    </location>
</feature>
<feature type="region of interest" description="Disordered" evidence="3">
    <location>
        <begin position="653"/>
        <end position="686"/>
    </location>
</feature>
<feature type="short sequence motif" description="'HIGH' region">
    <location>
        <begin position="57"/>
        <end position="67"/>
    </location>
</feature>
<feature type="short sequence motif" description="'KIIK' region">
    <location>
        <begin position="101"/>
        <end position="104"/>
    </location>
</feature>
<feature type="short sequence motif" description="'KMSKS' region">
    <location>
        <begin position="406"/>
        <end position="410"/>
    </location>
</feature>
<feature type="compositionally biased region" description="Basic and acidic residues" evidence="3">
    <location>
        <begin position="653"/>
        <end position="679"/>
    </location>
</feature>
<feature type="binding site" evidence="2">
    <location>
        <position position="55"/>
    </location>
    <ligand>
        <name>Zn(2+)</name>
        <dbReference type="ChEBI" id="CHEBI:29105"/>
    </ligand>
</feature>
<feature type="binding site" evidence="2">
    <location>
        <position position="56"/>
    </location>
    <ligand>
        <name>L-cysteine</name>
        <dbReference type="ChEBI" id="CHEBI:35235"/>
    </ligand>
</feature>
<feature type="binding site" evidence="2">
    <location>
        <position position="96"/>
    </location>
    <ligand>
        <name>L-cysteine</name>
        <dbReference type="ChEBI" id="CHEBI:35235"/>
    </ligand>
</feature>
<feature type="binding site" evidence="2">
    <location>
        <position position="348"/>
    </location>
    <ligand>
        <name>Zn(2+)</name>
        <dbReference type="ChEBI" id="CHEBI:29105"/>
    </ligand>
</feature>
<feature type="binding site" evidence="2">
    <location>
        <position position="373"/>
    </location>
    <ligand>
        <name>L-cysteine</name>
        <dbReference type="ChEBI" id="CHEBI:35235"/>
    </ligand>
</feature>
<feature type="binding site" evidence="2">
    <location>
        <position position="373"/>
    </location>
    <ligand>
        <name>Zn(2+)</name>
        <dbReference type="ChEBI" id="CHEBI:29105"/>
    </ligand>
</feature>
<feature type="binding site" evidence="2">
    <location>
        <position position="377"/>
    </location>
    <ligand>
        <name>Zn(2+)</name>
        <dbReference type="ChEBI" id="CHEBI:29105"/>
    </ligand>
</feature>
<feature type="binding site" evidence="1">
    <location>
        <position position="409"/>
    </location>
    <ligand>
        <name>ATP</name>
        <dbReference type="ChEBI" id="CHEBI:30616"/>
    </ligand>
</feature>
<feature type="modified residue" description="N-acetylalanine" evidence="16">
    <location>
        <position position="2"/>
    </location>
</feature>
<feature type="modified residue" description="Phosphoserine" evidence="17 18">
    <location>
        <position position="19"/>
    </location>
</feature>
<feature type="modified residue" description="Phosphoserine" evidence="18">
    <location>
        <position position="305"/>
    </location>
</feature>
<feature type="modified residue" description="Phosphoserine" evidence="17 18">
    <location>
        <position position="307"/>
    </location>
</feature>
<feature type="modified residue" description="N6-acetyllysine" evidence="14">
    <location>
        <position position="503"/>
    </location>
</feature>
<feature type="modified residue" description="Phosphoserine" evidence="13 15">
    <location>
        <position position="746"/>
    </location>
</feature>
<feature type="splice variant" id="VSP_043571" description="In isoform 3." evidence="7 8">
    <original>G</original>
    <variation>APDYRSILSISDEAARAQALNEHLSTRSYVQGYSLSQADVDAFRQLSAPPADPQLFHVARWFRHIEALLGSPCGKGQPCRLQAS</variation>
    <location>
        <position position="9"/>
    </location>
</feature>
<feature type="splice variant" id="VSP_006312" description="In isoform 2." evidence="6 9">
    <original>GLPTHDMEGKELSKGQAKKLKKLFEAQEKLYKEYLQMAQNGSFQ</original>
    <variation>VSMVCPHMTWRAKSSAKGKPRS</variation>
    <location>
        <begin position="705"/>
        <end position="748"/>
    </location>
</feature>
<feature type="sequence variant" id="VAR_084305" description="In MDBH; 50% reduction of cysteine-tRNA ligase activity." evidence="5">
    <original>R</original>
    <variation>H</variation>
    <location>
        <position position="341"/>
    </location>
</feature>
<feature type="sequence variant" id="VAR_084306" description="In MDBH; 84% reduction of cysteine-tRNA ligase activity." evidence="5">
    <original>S</original>
    <variation>L</variation>
    <location>
        <position position="359"/>
    </location>
</feature>
<feature type="sequence variant" id="VAR_084307" description="In MDBH; undetectable mutant protein in patient cells; loss-of-function variant unable to rescue viability defects in a yeast complementation assay." evidence="5">
    <location>
        <begin position="380"/>
        <end position="748"/>
    </location>
</feature>
<feature type="sequence variant" id="VAR_084308" description="In MDBH; loss-of-function variant unable to rescue viability defects in a yeast complementation assay." evidence="5">
    <original>L</original>
    <variation>Q</variation>
    <location>
        <position position="400"/>
    </location>
</feature>
<feature type="modified residue" description="Phosphoserine" evidence="15">
    <location sequence="P49589-3">
        <position position="79"/>
    </location>
</feature>
<dbReference type="EC" id="6.1.1.16" evidence="4 5"/>
<dbReference type="EMBL" id="L06845">
    <property type="protein sequence ID" value="AAA73901.1"/>
    <property type="status" value="ALT_FRAME"/>
    <property type="molecule type" value="mRNA"/>
</dbReference>
<dbReference type="EMBL" id="AF288206">
    <property type="protein sequence ID" value="AAG00578.1"/>
    <property type="molecule type" value="mRNA"/>
</dbReference>
<dbReference type="EMBL" id="AF288207">
    <property type="protein sequence ID" value="AAG00579.1"/>
    <property type="molecule type" value="mRNA"/>
</dbReference>
<dbReference type="EMBL" id="BT009913">
    <property type="protein sequence ID" value="AAP88915.1"/>
    <property type="molecule type" value="mRNA"/>
</dbReference>
<dbReference type="EMBL" id="AK302644">
    <property type="protein sequence ID" value="BAG63885.1"/>
    <property type="molecule type" value="mRNA"/>
</dbReference>
<dbReference type="EMBL" id="BX647906">
    <property type="protein sequence ID" value="CAI46108.1"/>
    <property type="molecule type" value="mRNA"/>
</dbReference>
<dbReference type="EMBL" id="AC108448">
    <property type="status" value="NOT_ANNOTATED_CDS"/>
    <property type="molecule type" value="Genomic_DNA"/>
</dbReference>
<dbReference type="EMBL" id="AC131971">
    <property type="status" value="NOT_ANNOTATED_CDS"/>
    <property type="molecule type" value="Genomic_DNA"/>
</dbReference>
<dbReference type="EMBL" id="CH471158">
    <property type="protein sequence ID" value="EAX02541.1"/>
    <property type="molecule type" value="Genomic_DNA"/>
</dbReference>
<dbReference type="EMBL" id="BC002880">
    <property type="protein sequence ID" value="AAH02880.1"/>
    <property type="molecule type" value="mRNA"/>
</dbReference>
<dbReference type="CCDS" id="CCDS41600.1">
    <molecule id="P49589-3"/>
</dbReference>
<dbReference type="CCDS" id="CCDS41602.1">
    <molecule id="P49589-2"/>
</dbReference>
<dbReference type="CCDS" id="CCDS7742.1">
    <molecule id="P49589-1"/>
</dbReference>
<dbReference type="RefSeq" id="NP_001014437.1">
    <molecule id="P49589-3"/>
    <property type="nucleotide sequence ID" value="NM_001014437.3"/>
</dbReference>
<dbReference type="RefSeq" id="NP_001742.1">
    <molecule id="P49589-1"/>
    <property type="nucleotide sequence ID" value="NM_001751.6"/>
</dbReference>
<dbReference type="RefSeq" id="NP_644802.1">
    <molecule id="P49589-2"/>
    <property type="nucleotide sequence ID" value="NM_139273.4"/>
</dbReference>
<dbReference type="SMR" id="P49589"/>
<dbReference type="BioGRID" id="107283">
    <property type="interactions" value="123"/>
</dbReference>
<dbReference type="FunCoup" id="P49589">
    <property type="interactions" value="2430"/>
</dbReference>
<dbReference type="IntAct" id="P49589">
    <property type="interactions" value="26"/>
</dbReference>
<dbReference type="MINT" id="P49589"/>
<dbReference type="STRING" id="9606.ENSP00000369897"/>
<dbReference type="ChEMBL" id="CHEMBL4105937"/>
<dbReference type="DrugBank" id="DB00151">
    <property type="generic name" value="Cysteine"/>
</dbReference>
<dbReference type="DrugCentral" id="P49589"/>
<dbReference type="GlyGen" id="P49589">
    <property type="glycosylation" value="2 sites, 1 N-linked glycan (1 site), 1 O-linked glycan (1 site)"/>
</dbReference>
<dbReference type="iPTMnet" id="P49589"/>
<dbReference type="MetOSite" id="P49589"/>
<dbReference type="PhosphoSitePlus" id="P49589"/>
<dbReference type="SwissPalm" id="P49589"/>
<dbReference type="BioMuta" id="CARS"/>
<dbReference type="DMDM" id="20141641"/>
<dbReference type="jPOST" id="P49589"/>
<dbReference type="MassIVE" id="P49589"/>
<dbReference type="PaxDb" id="9606-ENSP00000369897"/>
<dbReference type="PeptideAtlas" id="P49589"/>
<dbReference type="ProteomicsDB" id="56023">
    <molecule id="P49589-1"/>
</dbReference>
<dbReference type="ProteomicsDB" id="56024">
    <molecule id="P49589-2"/>
</dbReference>
<dbReference type="ProteomicsDB" id="56025">
    <molecule id="P49589-3"/>
</dbReference>
<dbReference type="Pumba" id="P49589"/>
<dbReference type="ABCD" id="P49589">
    <property type="antibodies" value="1 sequenced antibody"/>
</dbReference>
<dbReference type="Antibodypedia" id="1044">
    <property type="antibodies" value="243 antibodies from 30 providers"/>
</dbReference>
<dbReference type="DNASU" id="833"/>
<dbReference type="Ensembl" id="ENST00000278224.13">
    <molecule id="P49589-2"/>
    <property type="protein sequence ID" value="ENSP00000278224.9"/>
    <property type="gene ID" value="ENSG00000110619.18"/>
</dbReference>
<dbReference type="Ensembl" id="ENST00000380525.9">
    <molecule id="P49589-3"/>
    <property type="protein sequence ID" value="ENSP00000369897.4"/>
    <property type="gene ID" value="ENSG00000110619.18"/>
</dbReference>
<dbReference type="Ensembl" id="ENST00000397111.9">
    <molecule id="P49589-1"/>
    <property type="protein sequence ID" value="ENSP00000380300.5"/>
    <property type="gene ID" value="ENSG00000110619.18"/>
</dbReference>
<dbReference type="Ensembl" id="ENST00000612826.3">
    <molecule id="P49589-3"/>
    <property type="protein sequence ID" value="ENSP00000482336.1"/>
    <property type="gene ID" value="ENSG00000278191.4"/>
</dbReference>
<dbReference type="Ensembl" id="ENST00000632612.1">
    <molecule id="P49589-2"/>
    <property type="protein sequence ID" value="ENSP00000487923.1"/>
    <property type="gene ID" value="ENSG00000278191.4"/>
</dbReference>
<dbReference type="Ensembl" id="ENST00000633248.1">
    <molecule id="P49589-1"/>
    <property type="protein sequence ID" value="ENSP00000488657.1"/>
    <property type="gene ID" value="ENSG00000278191.4"/>
</dbReference>
<dbReference type="GeneID" id="833"/>
<dbReference type="KEGG" id="hsa:833"/>
<dbReference type="MANE-Select" id="ENST00000380525.9">
    <molecule id="P49589-3"/>
    <property type="protein sequence ID" value="ENSP00000369897.4"/>
    <property type="RefSeq nucleotide sequence ID" value="NM_001014437.3"/>
    <property type="RefSeq protein sequence ID" value="NP_001014437.1"/>
</dbReference>
<dbReference type="UCSC" id="uc001lxf.4">
    <molecule id="P49589-1"/>
    <property type="organism name" value="human"/>
</dbReference>
<dbReference type="AGR" id="HGNC:1493"/>
<dbReference type="CTD" id="833"/>
<dbReference type="DisGeNET" id="833"/>
<dbReference type="GeneCards" id="CARS1"/>
<dbReference type="HGNC" id="HGNC:1493">
    <property type="gene designation" value="CARS1"/>
</dbReference>
<dbReference type="HPA" id="ENSG00000110619">
    <property type="expression patterns" value="Low tissue specificity"/>
</dbReference>
<dbReference type="MalaCards" id="CARS1"/>
<dbReference type="MIM" id="123859">
    <property type="type" value="gene"/>
</dbReference>
<dbReference type="MIM" id="618891">
    <property type="type" value="phenotype"/>
</dbReference>
<dbReference type="neXtProt" id="NX_P49589"/>
<dbReference type="OpenTargets" id="ENSG00000110619"/>
<dbReference type="Orphanet" id="178342">
    <property type="disease" value="Inflammatory myofibroblastic tumor"/>
</dbReference>
<dbReference type="Orphanet" id="33364">
    <property type="disease" value="Trichothiodystrophy"/>
</dbReference>
<dbReference type="PharmGKB" id="PA26079"/>
<dbReference type="VEuPathDB" id="HostDB:ENSG00000110619"/>
<dbReference type="eggNOG" id="KOG1668">
    <property type="taxonomic scope" value="Eukaryota"/>
</dbReference>
<dbReference type="eggNOG" id="KOG2007">
    <property type="taxonomic scope" value="Eukaryota"/>
</dbReference>
<dbReference type="GeneTree" id="ENSGT00390000006347"/>
<dbReference type="HOGENOM" id="CLU_013528_3_3_1"/>
<dbReference type="InParanoid" id="P49589"/>
<dbReference type="OMA" id="FHNDMKS"/>
<dbReference type="OrthoDB" id="438179at2759"/>
<dbReference type="PAN-GO" id="P49589">
    <property type="GO annotations" value="4 GO annotations based on evolutionary models"/>
</dbReference>
<dbReference type="PhylomeDB" id="P49589"/>
<dbReference type="TreeFam" id="TF300384"/>
<dbReference type="PathwayCommons" id="P49589"/>
<dbReference type="Reactome" id="R-HSA-379716">
    <property type="pathway name" value="Cytosolic tRNA aminoacylation"/>
</dbReference>
<dbReference type="Reactome" id="R-HSA-9725370">
    <property type="pathway name" value="Signaling by ALK fusions and activated point mutants"/>
</dbReference>
<dbReference type="SignaLink" id="P49589"/>
<dbReference type="SIGNOR" id="P49589"/>
<dbReference type="BioGRID-ORCS" id="833">
    <property type="hits" value="817 hits in 1175 CRISPR screens"/>
</dbReference>
<dbReference type="ChiTaRS" id="CARS">
    <property type="organism name" value="human"/>
</dbReference>
<dbReference type="GenomeRNAi" id="833"/>
<dbReference type="Pharos" id="P49589">
    <property type="development level" value="Tchem"/>
</dbReference>
<dbReference type="PRO" id="PR:P49589"/>
<dbReference type="Proteomes" id="UP000005640">
    <property type="component" value="Chromosome 11"/>
</dbReference>
<dbReference type="RNAct" id="P49589">
    <property type="molecule type" value="protein"/>
</dbReference>
<dbReference type="Bgee" id="ENSG00000110619">
    <property type="expression patterns" value="Expressed in olfactory segment of nasal mucosa and 96 other cell types or tissues"/>
</dbReference>
<dbReference type="ExpressionAtlas" id="P49589">
    <property type="expression patterns" value="baseline and differential"/>
</dbReference>
<dbReference type="GO" id="GO:0005737">
    <property type="term" value="C:cytoplasm"/>
    <property type="evidence" value="ECO:0000314"/>
    <property type="project" value="UniProtKB"/>
</dbReference>
<dbReference type="GO" id="GO:0005829">
    <property type="term" value="C:cytosol"/>
    <property type="evidence" value="ECO:0000314"/>
    <property type="project" value="HPA"/>
</dbReference>
<dbReference type="GO" id="GO:0005524">
    <property type="term" value="F:ATP binding"/>
    <property type="evidence" value="ECO:0000314"/>
    <property type="project" value="UniProtKB"/>
</dbReference>
<dbReference type="GO" id="GO:0004817">
    <property type="term" value="F:cysteine-tRNA ligase activity"/>
    <property type="evidence" value="ECO:0000314"/>
    <property type="project" value="UniProtKB"/>
</dbReference>
<dbReference type="GO" id="GO:0042802">
    <property type="term" value="F:identical protein binding"/>
    <property type="evidence" value="ECO:0000353"/>
    <property type="project" value="UniProtKB"/>
</dbReference>
<dbReference type="GO" id="GO:0046872">
    <property type="term" value="F:metal ion binding"/>
    <property type="evidence" value="ECO:0007669"/>
    <property type="project" value="UniProtKB-KW"/>
</dbReference>
<dbReference type="GO" id="GO:0042803">
    <property type="term" value="F:protein homodimerization activity"/>
    <property type="evidence" value="ECO:0000314"/>
    <property type="project" value="UniProtKB"/>
</dbReference>
<dbReference type="GO" id="GO:0000049">
    <property type="term" value="F:tRNA binding"/>
    <property type="evidence" value="ECO:0000314"/>
    <property type="project" value="UniProtKB"/>
</dbReference>
<dbReference type="GO" id="GO:0006423">
    <property type="term" value="P:cysteinyl-tRNA aminoacylation"/>
    <property type="evidence" value="ECO:0000314"/>
    <property type="project" value="UniProtKB"/>
</dbReference>
<dbReference type="CDD" id="cd00672">
    <property type="entry name" value="CysRS_core"/>
    <property type="match status" value="1"/>
</dbReference>
<dbReference type="FunFam" id="3.40.50.620:FF:000027">
    <property type="entry name" value="Cysteine--tRNA ligase, cytoplasmic"/>
    <property type="match status" value="1"/>
</dbReference>
<dbReference type="FunFam" id="3.40.50.620:FF:000228">
    <property type="entry name" value="Cysteinyl-tRNA synthetase"/>
    <property type="match status" value="1"/>
</dbReference>
<dbReference type="Gene3D" id="3.40.50.620">
    <property type="entry name" value="HUPs"/>
    <property type="match status" value="1"/>
</dbReference>
<dbReference type="HAMAP" id="MF_00041">
    <property type="entry name" value="Cys_tRNA_synth"/>
    <property type="match status" value="1"/>
</dbReference>
<dbReference type="InterPro" id="IPR015803">
    <property type="entry name" value="Cys-tRNA-ligase"/>
</dbReference>
<dbReference type="InterPro" id="IPR024909">
    <property type="entry name" value="Cys-tRNA/MSH_ligase"/>
</dbReference>
<dbReference type="InterPro" id="IPR014729">
    <property type="entry name" value="Rossmann-like_a/b/a_fold"/>
</dbReference>
<dbReference type="InterPro" id="IPR032678">
    <property type="entry name" value="tRNA-synt_1_cat_dom"/>
</dbReference>
<dbReference type="InterPro" id="IPR009080">
    <property type="entry name" value="tRNAsynth_Ia_anticodon-bd"/>
</dbReference>
<dbReference type="NCBIfam" id="TIGR00435">
    <property type="entry name" value="cysS"/>
    <property type="match status" value="1"/>
</dbReference>
<dbReference type="PANTHER" id="PTHR10890:SF3">
    <property type="entry name" value="CYSTEINE--TRNA LIGASE, CYTOPLASMIC"/>
    <property type="match status" value="1"/>
</dbReference>
<dbReference type="PANTHER" id="PTHR10890">
    <property type="entry name" value="CYSTEINYL-TRNA SYNTHETASE"/>
    <property type="match status" value="1"/>
</dbReference>
<dbReference type="Pfam" id="PF01406">
    <property type="entry name" value="tRNA-synt_1e"/>
    <property type="match status" value="1"/>
</dbReference>
<dbReference type="PRINTS" id="PR00983">
    <property type="entry name" value="TRNASYNTHCYS"/>
</dbReference>
<dbReference type="SUPFAM" id="SSF47323">
    <property type="entry name" value="Anticodon-binding domain of a subclass of class I aminoacyl-tRNA synthetases"/>
    <property type="match status" value="1"/>
</dbReference>
<dbReference type="SUPFAM" id="SSF52374">
    <property type="entry name" value="Nucleotidylyl transferase"/>
    <property type="match status" value="1"/>
</dbReference>
<gene>
    <name evidence="12" type="primary">CARS1</name>
    <name type="synonym">CARS</name>
</gene>
<evidence type="ECO:0000250" key="1"/>
<evidence type="ECO:0000250" key="2">
    <source>
        <dbReference type="UniProtKB" id="P21888"/>
    </source>
</evidence>
<evidence type="ECO:0000256" key="3">
    <source>
        <dbReference type="SAM" id="MobiDB-lite"/>
    </source>
</evidence>
<evidence type="ECO:0000269" key="4">
    <source>
    </source>
</evidence>
<evidence type="ECO:0000269" key="5">
    <source>
    </source>
</evidence>
<evidence type="ECO:0000303" key="6">
    <source>
    </source>
</evidence>
<evidence type="ECO:0000303" key="7">
    <source>
    </source>
</evidence>
<evidence type="ECO:0000303" key="8">
    <source>
    </source>
</evidence>
<evidence type="ECO:0000303" key="9">
    <source>
    </source>
</evidence>
<evidence type="ECO:0000305" key="10"/>
<evidence type="ECO:0000305" key="11">
    <source>
    </source>
</evidence>
<evidence type="ECO:0000312" key="12">
    <source>
        <dbReference type="HGNC" id="HGNC:1493"/>
    </source>
</evidence>
<evidence type="ECO:0007744" key="13">
    <source>
    </source>
</evidence>
<evidence type="ECO:0007744" key="14">
    <source>
    </source>
</evidence>
<evidence type="ECO:0007744" key="15">
    <source>
    </source>
</evidence>
<evidence type="ECO:0007744" key="16">
    <source>
    </source>
</evidence>
<evidence type="ECO:0007744" key="17">
    <source>
    </source>
</evidence>
<evidence type="ECO:0007744" key="18">
    <source>
    </source>
</evidence>
<accession>P49589</accession>
<accession>Q53XI8</accession>
<accession>Q5HYE4</accession>
<accession>Q9HD24</accession>
<accession>Q9HD25</accession>